<comment type="function">
    <text evidence="1">Binds as a heterodimer with protein bS6 to the central domain of the 16S rRNA, where it helps stabilize the platform of the 30S subunit.</text>
</comment>
<comment type="subunit">
    <text evidence="1">Part of the 30S ribosomal subunit. Forms a tight heterodimer with protein bS6.</text>
</comment>
<comment type="similarity">
    <text evidence="1">Belongs to the bacterial ribosomal protein bS18 family.</text>
</comment>
<sequence>MARRKRICRFTAEGVKEIDYKDLETLKAYITEVGKIVPARITGTNVFYQRQLATAVKRARFLALLPYTDQH</sequence>
<evidence type="ECO:0000255" key="1">
    <source>
        <dbReference type="HAMAP-Rule" id="MF_00270"/>
    </source>
</evidence>
<evidence type="ECO:0000305" key="2"/>
<feature type="chain" id="PRO_0000345461" description="Small ribosomal subunit protein bS18">
    <location>
        <begin position="1"/>
        <end position="71"/>
    </location>
</feature>
<gene>
    <name evidence="1" type="primary">rpsR</name>
    <name type="ordered locus">DNO_1120</name>
</gene>
<reference key="1">
    <citation type="journal article" date="2007" name="Nat. Biotechnol.">
        <title>Genome sequence and identification of candidate vaccine antigens from the animal pathogen Dichelobacter nodosus.</title>
        <authorList>
            <person name="Myers G.S.A."/>
            <person name="Parker D."/>
            <person name="Al-Hasani K."/>
            <person name="Kennan R.M."/>
            <person name="Seemann T."/>
            <person name="Ren Q."/>
            <person name="Badger J.H."/>
            <person name="Selengut J.D."/>
            <person name="Deboy R.T."/>
            <person name="Tettelin H."/>
            <person name="Boyce J.D."/>
            <person name="McCarl V.P."/>
            <person name="Han X."/>
            <person name="Nelson W.C."/>
            <person name="Madupu R."/>
            <person name="Mohamoud Y."/>
            <person name="Holley T."/>
            <person name="Fedorova N."/>
            <person name="Khouri H."/>
            <person name="Bottomley S.P."/>
            <person name="Whittington R.J."/>
            <person name="Adler B."/>
            <person name="Songer J.G."/>
            <person name="Rood J.I."/>
            <person name="Paulsen I.T."/>
        </authorList>
    </citation>
    <scope>NUCLEOTIDE SEQUENCE [LARGE SCALE GENOMIC DNA]</scope>
    <source>
        <strain>VCS1703A</strain>
    </source>
</reference>
<name>RS18_DICNV</name>
<keyword id="KW-1185">Reference proteome</keyword>
<keyword id="KW-0687">Ribonucleoprotein</keyword>
<keyword id="KW-0689">Ribosomal protein</keyword>
<keyword id="KW-0694">RNA-binding</keyword>
<keyword id="KW-0699">rRNA-binding</keyword>
<organism>
    <name type="scientific">Dichelobacter nodosus (strain VCS1703A)</name>
    <dbReference type="NCBI Taxonomy" id="246195"/>
    <lineage>
        <taxon>Bacteria</taxon>
        <taxon>Pseudomonadati</taxon>
        <taxon>Pseudomonadota</taxon>
        <taxon>Gammaproteobacteria</taxon>
        <taxon>Cardiobacteriales</taxon>
        <taxon>Cardiobacteriaceae</taxon>
        <taxon>Dichelobacter</taxon>
    </lineage>
</organism>
<accession>A5EXN0</accession>
<proteinExistence type="inferred from homology"/>
<dbReference type="EMBL" id="CP000513">
    <property type="protein sequence ID" value="ABQ13339.1"/>
    <property type="molecule type" value="Genomic_DNA"/>
</dbReference>
<dbReference type="RefSeq" id="WP_012031424.1">
    <property type="nucleotide sequence ID" value="NC_009446.1"/>
</dbReference>
<dbReference type="SMR" id="A5EXN0"/>
<dbReference type="STRING" id="246195.DNO_1120"/>
<dbReference type="KEGG" id="dno:DNO_1120"/>
<dbReference type="eggNOG" id="COG0238">
    <property type="taxonomic scope" value="Bacteria"/>
</dbReference>
<dbReference type="HOGENOM" id="CLU_148710_2_3_6"/>
<dbReference type="OrthoDB" id="9812008at2"/>
<dbReference type="Proteomes" id="UP000000248">
    <property type="component" value="Chromosome"/>
</dbReference>
<dbReference type="GO" id="GO:0022627">
    <property type="term" value="C:cytosolic small ribosomal subunit"/>
    <property type="evidence" value="ECO:0007669"/>
    <property type="project" value="TreeGrafter"/>
</dbReference>
<dbReference type="GO" id="GO:0070181">
    <property type="term" value="F:small ribosomal subunit rRNA binding"/>
    <property type="evidence" value="ECO:0007669"/>
    <property type="project" value="TreeGrafter"/>
</dbReference>
<dbReference type="GO" id="GO:0003735">
    <property type="term" value="F:structural constituent of ribosome"/>
    <property type="evidence" value="ECO:0007669"/>
    <property type="project" value="InterPro"/>
</dbReference>
<dbReference type="GO" id="GO:0006412">
    <property type="term" value="P:translation"/>
    <property type="evidence" value="ECO:0007669"/>
    <property type="project" value="UniProtKB-UniRule"/>
</dbReference>
<dbReference type="Gene3D" id="4.10.640.10">
    <property type="entry name" value="Ribosomal protein S18"/>
    <property type="match status" value="1"/>
</dbReference>
<dbReference type="HAMAP" id="MF_00270">
    <property type="entry name" value="Ribosomal_bS18"/>
    <property type="match status" value="1"/>
</dbReference>
<dbReference type="InterPro" id="IPR001648">
    <property type="entry name" value="Ribosomal_bS18"/>
</dbReference>
<dbReference type="InterPro" id="IPR018275">
    <property type="entry name" value="Ribosomal_bS18_CS"/>
</dbReference>
<dbReference type="InterPro" id="IPR036870">
    <property type="entry name" value="Ribosomal_bS18_sf"/>
</dbReference>
<dbReference type="NCBIfam" id="TIGR00165">
    <property type="entry name" value="S18"/>
    <property type="match status" value="1"/>
</dbReference>
<dbReference type="PANTHER" id="PTHR13479">
    <property type="entry name" value="30S RIBOSOMAL PROTEIN S18"/>
    <property type="match status" value="1"/>
</dbReference>
<dbReference type="PANTHER" id="PTHR13479:SF40">
    <property type="entry name" value="SMALL RIBOSOMAL SUBUNIT PROTEIN BS18M"/>
    <property type="match status" value="1"/>
</dbReference>
<dbReference type="Pfam" id="PF01084">
    <property type="entry name" value="Ribosomal_S18"/>
    <property type="match status" value="1"/>
</dbReference>
<dbReference type="PRINTS" id="PR00974">
    <property type="entry name" value="RIBOSOMALS18"/>
</dbReference>
<dbReference type="SUPFAM" id="SSF46911">
    <property type="entry name" value="Ribosomal protein S18"/>
    <property type="match status" value="1"/>
</dbReference>
<dbReference type="PROSITE" id="PS00057">
    <property type="entry name" value="RIBOSOMAL_S18"/>
    <property type="match status" value="1"/>
</dbReference>
<protein>
    <recommendedName>
        <fullName evidence="1">Small ribosomal subunit protein bS18</fullName>
    </recommendedName>
    <alternativeName>
        <fullName evidence="2">30S ribosomal protein S18</fullName>
    </alternativeName>
</protein>